<organism>
    <name type="scientific">Saccharomyces cerevisiae (strain YJM789)</name>
    <name type="common">Baker's yeast</name>
    <dbReference type="NCBI Taxonomy" id="307796"/>
    <lineage>
        <taxon>Eukaryota</taxon>
        <taxon>Fungi</taxon>
        <taxon>Dikarya</taxon>
        <taxon>Ascomycota</taxon>
        <taxon>Saccharomycotina</taxon>
        <taxon>Saccharomycetes</taxon>
        <taxon>Saccharomycetales</taxon>
        <taxon>Saccharomycetaceae</taxon>
        <taxon>Saccharomyces</taxon>
    </lineage>
</organism>
<comment type="function">
    <text evidence="1">Component of the biogenesis of lysosome-related organelles complex-1 (BLOC-1) involved in endosomal cargo sorting.</text>
</comment>
<comment type="subunit">
    <text evidence="1">Component of the biogenesis of lysosome-related organelles complex-1 (BLOC-1) composed of at least BLI1, BLS1, CNL1, KXD1, SNN1 and VAB2. Interacts with VAC8.</text>
</comment>
<comment type="subcellular location">
    <subcellularLocation>
        <location evidence="1">Cytoplasmic vesicle</location>
    </subcellularLocation>
    <subcellularLocation>
        <location evidence="1">Vacuole</location>
    </subcellularLocation>
    <subcellularLocation>
        <location evidence="1">Cytoplasm</location>
    </subcellularLocation>
</comment>
<comment type="similarity">
    <text evidence="3">Belongs to the VAB2 family.</text>
</comment>
<keyword id="KW-0175">Coiled coil</keyword>
<keyword id="KW-0963">Cytoplasm</keyword>
<keyword id="KW-0968">Cytoplasmic vesicle</keyword>
<keyword id="KW-0813">Transport</keyword>
<keyword id="KW-0926">Vacuole</keyword>
<protein>
    <recommendedName>
        <fullName>Biogenesis of lysosome-related organelles complex 1 subunit VAB2</fullName>
        <shortName>BLOC-1 subunit VAB2</shortName>
    </recommendedName>
    <alternativeName>
        <fullName>VAC8-binding protein 2</fullName>
    </alternativeName>
</protein>
<reference key="1">
    <citation type="journal article" date="2007" name="Proc. Natl. Acad. Sci. U.S.A.">
        <title>Genome sequencing and comparative analysis of Saccharomyces cerevisiae strain YJM789.</title>
        <authorList>
            <person name="Wei W."/>
            <person name="McCusker J.H."/>
            <person name="Hyman R.W."/>
            <person name="Jones T."/>
            <person name="Ning Y."/>
            <person name="Cao Z."/>
            <person name="Gu Z."/>
            <person name="Bruno D."/>
            <person name="Miranda M."/>
            <person name="Nguyen M."/>
            <person name="Wilhelmy J."/>
            <person name="Komp C."/>
            <person name="Tamse R."/>
            <person name="Wang X."/>
            <person name="Jia P."/>
            <person name="Luedi P."/>
            <person name="Oefner P.J."/>
            <person name="David L."/>
            <person name="Dietrich F.S."/>
            <person name="Li Y."/>
            <person name="Davis R.W."/>
            <person name="Steinmetz L.M."/>
        </authorList>
    </citation>
    <scope>NUCLEOTIDE SEQUENCE [LARGE SCALE GENOMIC DNA]</scope>
    <source>
        <strain>YJM789</strain>
    </source>
</reference>
<name>VAB2_YEAS7</name>
<proteinExistence type="inferred from homology"/>
<sequence length="282" mass="31365">MVADLTKGILKWKSRIEFDAVGSSSYYEELKGLPPLASHKKLTQAAIFNSTKYELLQVKKDILSIYEVVSRDIDEERNQMQQIELQLKKSLKKVEHSYKNVLKQRASTNCINGNDRLLANAEKKIGSLNEELACVNDIVSDIVNNLTALNANLPKKAQLLKDDSINVAHYPLLFDFLHKSCPKSIIATSEASIHENASPSPLLEHDELPAESINSFYGENELQSDSLAPLQTHDDNISSCKKILPPKFNTTSGPSIETNFENISADGLTYTKCSLKNSISLT</sequence>
<evidence type="ECO:0000250" key="1"/>
<evidence type="ECO:0000255" key="2"/>
<evidence type="ECO:0000305" key="3"/>
<gene>
    <name type="primary">VAB2</name>
    <name type="ORF">SCY_1489</name>
</gene>
<accession>A6ZQU2</accession>
<dbReference type="EMBL" id="AAFW02000048">
    <property type="protein sequence ID" value="EDN62962.1"/>
    <property type="molecule type" value="Genomic_DNA"/>
</dbReference>
<dbReference type="SMR" id="A6ZQU2"/>
<dbReference type="HOGENOM" id="CLU_086126_0_0_1"/>
<dbReference type="Proteomes" id="UP000007060">
    <property type="component" value="Unassembled WGS sequence"/>
</dbReference>
<dbReference type="GO" id="GO:0031410">
    <property type="term" value="C:cytoplasmic vesicle"/>
    <property type="evidence" value="ECO:0007669"/>
    <property type="project" value="UniProtKB-KW"/>
</dbReference>
<dbReference type="GO" id="GO:0005773">
    <property type="term" value="C:vacuole"/>
    <property type="evidence" value="ECO:0007669"/>
    <property type="project" value="UniProtKB-SubCell"/>
</dbReference>
<feature type="chain" id="PRO_0000320515" description="Biogenesis of lysosome-related organelles complex 1 subunit VAB2">
    <location>
        <begin position="1"/>
        <end position="282"/>
    </location>
</feature>
<feature type="coiled-coil region" evidence="2">
    <location>
        <begin position="64"/>
        <end position="140"/>
    </location>
</feature>